<protein>
    <recommendedName>
        <fullName evidence="1">Putative pyruvate, phosphate dikinase regulatory protein</fullName>
        <shortName evidence="1">PPDK regulatory protein</shortName>
        <ecNumber evidence="1">2.7.11.32</ecNumber>
        <ecNumber evidence="1">2.7.4.27</ecNumber>
    </recommendedName>
</protein>
<accession>Q8XI79</accession>
<organism>
    <name type="scientific">Clostridium perfringens (strain 13 / Type A)</name>
    <dbReference type="NCBI Taxonomy" id="195102"/>
    <lineage>
        <taxon>Bacteria</taxon>
        <taxon>Bacillati</taxon>
        <taxon>Bacillota</taxon>
        <taxon>Clostridia</taxon>
        <taxon>Eubacteriales</taxon>
        <taxon>Clostridiaceae</taxon>
        <taxon>Clostridium</taxon>
    </lineage>
</organism>
<keyword id="KW-0418">Kinase</keyword>
<keyword id="KW-0547">Nucleotide-binding</keyword>
<keyword id="KW-1185">Reference proteome</keyword>
<keyword id="KW-0723">Serine/threonine-protein kinase</keyword>
<keyword id="KW-0808">Transferase</keyword>
<feature type="chain" id="PRO_0000196645" description="Putative pyruvate, phosphate dikinase regulatory protein">
    <location>
        <begin position="1"/>
        <end position="266"/>
    </location>
</feature>
<feature type="binding site" evidence="1">
    <location>
        <begin position="147"/>
        <end position="154"/>
    </location>
    <ligand>
        <name>ADP</name>
        <dbReference type="ChEBI" id="CHEBI:456216"/>
    </ligand>
</feature>
<evidence type="ECO:0000255" key="1">
    <source>
        <dbReference type="HAMAP-Rule" id="MF_00921"/>
    </source>
</evidence>
<proteinExistence type="inferred from homology"/>
<reference key="1">
    <citation type="journal article" date="2002" name="Proc. Natl. Acad. Sci. U.S.A.">
        <title>Complete genome sequence of Clostridium perfringens, an anaerobic flesh-eater.</title>
        <authorList>
            <person name="Shimizu T."/>
            <person name="Ohtani K."/>
            <person name="Hirakawa H."/>
            <person name="Ohshima K."/>
            <person name="Yamashita A."/>
            <person name="Shiba T."/>
            <person name="Ogasawara N."/>
            <person name="Hattori M."/>
            <person name="Kuhara S."/>
            <person name="Hayashi H."/>
        </authorList>
    </citation>
    <scope>NUCLEOTIDE SEQUENCE [LARGE SCALE GENOMIC DNA]</scope>
    <source>
        <strain>13 / Type A</strain>
    </source>
</reference>
<comment type="function">
    <text evidence="1">Bifunctional serine/threonine kinase and phosphorylase involved in the regulation of the pyruvate, phosphate dikinase (PPDK) by catalyzing its phosphorylation/dephosphorylation.</text>
</comment>
<comment type="catalytic activity">
    <reaction evidence="1">
        <text>N(tele)-phospho-L-histidyl/L-threonyl-[pyruvate, phosphate dikinase] + ADP = N(tele)-phospho-L-histidyl/O-phospho-L-threonyl-[pyruvate, phosphate dikinase] + AMP + H(+)</text>
        <dbReference type="Rhea" id="RHEA:43692"/>
        <dbReference type="Rhea" id="RHEA-COMP:10650"/>
        <dbReference type="Rhea" id="RHEA-COMP:10651"/>
        <dbReference type="ChEBI" id="CHEBI:15378"/>
        <dbReference type="ChEBI" id="CHEBI:30013"/>
        <dbReference type="ChEBI" id="CHEBI:61977"/>
        <dbReference type="ChEBI" id="CHEBI:83586"/>
        <dbReference type="ChEBI" id="CHEBI:456215"/>
        <dbReference type="ChEBI" id="CHEBI:456216"/>
        <dbReference type="EC" id="2.7.11.32"/>
    </reaction>
</comment>
<comment type="catalytic activity">
    <reaction evidence="1">
        <text>N(tele)-phospho-L-histidyl/O-phospho-L-threonyl-[pyruvate, phosphate dikinase] + phosphate + H(+) = N(tele)-phospho-L-histidyl/L-threonyl-[pyruvate, phosphate dikinase] + diphosphate</text>
        <dbReference type="Rhea" id="RHEA:43696"/>
        <dbReference type="Rhea" id="RHEA-COMP:10650"/>
        <dbReference type="Rhea" id="RHEA-COMP:10651"/>
        <dbReference type="ChEBI" id="CHEBI:15378"/>
        <dbReference type="ChEBI" id="CHEBI:30013"/>
        <dbReference type="ChEBI" id="CHEBI:33019"/>
        <dbReference type="ChEBI" id="CHEBI:43474"/>
        <dbReference type="ChEBI" id="CHEBI:61977"/>
        <dbReference type="ChEBI" id="CHEBI:83586"/>
        <dbReference type="EC" id="2.7.4.27"/>
    </reaction>
</comment>
<comment type="similarity">
    <text evidence="1">Belongs to the pyruvate, phosphate/water dikinase regulatory protein family. PDRP subfamily.</text>
</comment>
<dbReference type="EC" id="2.7.11.32" evidence="1"/>
<dbReference type="EC" id="2.7.4.27" evidence="1"/>
<dbReference type="EMBL" id="BA000016">
    <property type="protein sequence ID" value="BAB81948.1"/>
    <property type="molecule type" value="Genomic_DNA"/>
</dbReference>
<dbReference type="RefSeq" id="WP_003466672.1">
    <property type="nucleotide sequence ID" value="NC_003366.1"/>
</dbReference>
<dbReference type="SMR" id="Q8XI79"/>
<dbReference type="STRING" id="195102.gene:10491526"/>
<dbReference type="KEGG" id="cpe:CPE2242"/>
<dbReference type="HOGENOM" id="CLU_046206_2_1_9"/>
<dbReference type="Proteomes" id="UP000000818">
    <property type="component" value="Chromosome"/>
</dbReference>
<dbReference type="GO" id="GO:0043531">
    <property type="term" value="F:ADP binding"/>
    <property type="evidence" value="ECO:0007669"/>
    <property type="project" value="UniProtKB-UniRule"/>
</dbReference>
<dbReference type="GO" id="GO:0005524">
    <property type="term" value="F:ATP binding"/>
    <property type="evidence" value="ECO:0007669"/>
    <property type="project" value="InterPro"/>
</dbReference>
<dbReference type="GO" id="GO:0016776">
    <property type="term" value="F:phosphotransferase activity, phosphate group as acceptor"/>
    <property type="evidence" value="ECO:0007669"/>
    <property type="project" value="UniProtKB-UniRule"/>
</dbReference>
<dbReference type="GO" id="GO:0004674">
    <property type="term" value="F:protein serine/threonine kinase activity"/>
    <property type="evidence" value="ECO:0007669"/>
    <property type="project" value="UniProtKB-UniRule"/>
</dbReference>
<dbReference type="HAMAP" id="MF_00921">
    <property type="entry name" value="PDRP"/>
    <property type="match status" value="1"/>
</dbReference>
<dbReference type="InterPro" id="IPR005177">
    <property type="entry name" value="Kinase-pyrophosphorylase"/>
</dbReference>
<dbReference type="InterPro" id="IPR026565">
    <property type="entry name" value="PPDK_reg"/>
</dbReference>
<dbReference type="NCBIfam" id="NF003742">
    <property type="entry name" value="PRK05339.1"/>
    <property type="match status" value="1"/>
</dbReference>
<dbReference type="PANTHER" id="PTHR31756">
    <property type="entry name" value="PYRUVATE, PHOSPHATE DIKINASE REGULATORY PROTEIN 1, CHLOROPLASTIC"/>
    <property type="match status" value="1"/>
</dbReference>
<dbReference type="PANTHER" id="PTHR31756:SF3">
    <property type="entry name" value="PYRUVATE, PHOSPHATE DIKINASE REGULATORY PROTEIN 1, CHLOROPLASTIC"/>
    <property type="match status" value="1"/>
</dbReference>
<dbReference type="Pfam" id="PF03618">
    <property type="entry name" value="Kinase-PPPase"/>
    <property type="match status" value="1"/>
</dbReference>
<sequence length="266" mass="30215">MLTIFAVSDSIGETAQQVAMAAASQFKDNAEVKRIPYVKSLEDVEDLMKTIEDCEACMIVSTIITVNVREYLTQKCIEKNINIINVLGPIINVASTILNKYPDYNPGAMWNTDETYYKRIEAMEFAMQYDDSKDYRGLKNADVVLVGLSRTSKTPLCMYLANKGIKAINIPLVPEVGVPEELYEIDKKKIFGLTINPLQLIEIRKRRLDKFHRISADIEYASDSRILEEFEFADKILRKIGCRTIDVTQRAIEDTALIIMEKLGVK</sequence>
<gene>
    <name type="ordered locus">CPE2242</name>
</gene>
<name>PDRP_CLOPE</name>